<comment type="function">
    <text evidence="1">Required for endonucleolytic cleavage during polyadenylation-dependent pre-mRNA 3'-end formation.</text>
</comment>
<comment type="subcellular location">
    <subcellularLocation>
        <location evidence="1">Nucleus</location>
    </subcellularLocation>
</comment>
<comment type="similarity">
    <text evidence="1">Belongs to the Clp1 family. Clp1 subfamily.</text>
</comment>
<keyword id="KW-0067">ATP-binding</keyword>
<keyword id="KW-0507">mRNA processing</keyword>
<keyword id="KW-0547">Nucleotide-binding</keyword>
<keyword id="KW-0539">Nucleus</keyword>
<keyword id="KW-1185">Reference proteome</keyword>
<sequence>MSEDHGKDYTLESDSELRFEIEQKDAKVLVSLVSGFAELFGTELVKKKQYEFGVGAKVAIFTYQGCVLHVSGKMDVCYISKETPMVQYVNCHAALEQFRMEAEEKDRYGPVAMVVGPMDVGKSTLCRILLNYAVRVGRRPLYADLDVGQGSIAISGSVATILIERPANVEEGFAKTAPLVYHFGHKSPSGNSVLYNAVVSKMAEVTLQSLNSNKRTKSSGIIINTCGWVKGSGYAHLLHAAKAYGACAIFVLDQERLYNELLRDVPKGVHVVLLPKSGGVVERSKELRHEARDQRIKEYFYGNTRAPFYPFSFEVKFQDLRLYKIGAPPLPDSCMPIGMKAEDNKTKVVAVTPTPALIHHVLALSFAESVEDDVIGTNVAGFCCVTEVDMERQAVMLLSPQPRPLPPNALLLWSELQFMDNHT</sequence>
<reference key="1">
    <citation type="journal article" date="2007" name="Nature">
        <title>Evolution of genes and genomes on the Drosophila phylogeny.</title>
        <authorList>
            <consortium name="Drosophila 12 genomes consortium"/>
        </authorList>
    </citation>
    <scope>NUCLEOTIDE SEQUENCE [LARGE SCALE GENOMIC DNA]</scope>
</reference>
<accession>B4QEE3</accession>
<name>CLP1_DROSI</name>
<proteinExistence type="inferred from homology"/>
<protein>
    <recommendedName>
        <fullName evidence="1">Protein CLP1 homolog</fullName>
    </recommendedName>
</protein>
<feature type="chain" id="PRO_0000375185" description="Protein CLP1 homolog">
    <location>
        <begin position="1"/>
        <end position="423"/>
    </location>
</feature>
<feature type="binding site" evidence="1">
    <location>
        <position position="16"/>
    </location>
    <ligand>
        <name>ATP</name>
        <dbReference type="ChEBI" id="CHEBI:30616"/>
    </ligand>
</feature>
<feature type="binding site" evidence="1">
    <location>
        <position position="57"/>
    </location>
    <ligand>
        <name>ATP</name>
        <dbReference type="ChEBI" id="CHEBI:30616"/>
    </ligand>
</feature>
<feature type="binding site" evidence="1">
    <location>
        <begin position="119"/>
        <end position="124"/>
    </location>
    <ligand>
        <name>ATP</name>
        <dbReference type="ChEBI" id="CHEBI:30616"/>
    </ligand>
</feature>
<organism>
    <name type="scientific">Drosophila simulans</name>
    <name type="common">Fruit fly</name>
    <dbReference type="NCBI Taxonomy" id="7240"/>
    <lineage>
        <taxon>Eukaryota</taxon>
        <taxon>Metazoa</taxon>
        <taxon>Ecdysozoa</taxon>
        <taxon>Arthropoda</taxon>
        <taxon>Hexapoda</taxon>
        <taxon>Insecta</taxon>
        <taxon>Pterygota</taxon>
        <taxon>Neoptera</taxon>
        <taxon>Endopterygota</taxon>
        <taxon>Diptera</taxon>
        <taxon>Brachycera</taxon>
        <taxon>Muscomorpha</taxon>
        <taxon>Ephydroidea</taxon>
        <taxon>Drosophilidae</taxon>
        <taxon>Drosophila</taxon>
        <taxon>Sophophora</taxon>
    </lineage>
</organism>
<gene>
    <name type="primary">cbc</name>
    <name type="ORF">GD25757</name>
</gene>
<dbReference type="EMBL" id="CM000362">
    <property type="protein sequence ID" value="EDX06933.1"/>
    <property type="molecule type" value="Genomic_DNA"/>
</dbReference>
<dbReference type="SMR" id="B4QEE3"/>
<dbReference type="STRING" id="7240.B4QEE3"/>
<dbReference type="EnsemblMetazoa" id="FBtr0225667">
    <property type="protein sequence ID" value="FBpp0224159"/>
    <property type="gene ID" value="FBgn0197038"/>
</dbReference>
<dbReference type="EnsemblMetazoa" id="XM_002081312.4">
    <property type="protein sequence ID" value="XP_002081348.1"/>
    <property type="gene ID" value="LOC6734325"/>
</dbReference>
<dbReference type="GeneID" id="6734325"/>
<dbReference type="CTD" id="36494"/>
<dbReference type="HOGENOM" id="CLU_018195_1_0_1"/>
<dbReference type="OMA" id="VQYVNCH"/>
<dbReference type="OrthoDB" id="258143at2759"/>
<dbReference type="PhylomeDB" id="B4QEE3"/>
<dbReference type="Proteomes" id="UP000000304">
    <property type="component" value="Chromosome 2R"/>
</dbReference>
<dbReference type="Bgee" id="FBgn0197038">
    <property type="expression patterns" value="Expressed in embryo and 3 other cell types or tissues"/>
</dbReference>
<dbReference type="GO" id="GO:0005849">
    <property type="term" value="C:mRNA cleavage factor complex"/>
    <property type="evidence" value="ECO:0007669"/>
    <property type="project" value="InterPro"/>
</dbReference>
<dbReference type="GO" id="GO:0000214">
    <property type="term" value="C:tRNA-intron endonuclease complex"/>
    <property type="evidence" value="ECO:0000250"/>
    <property type="project" value="UniProtKB"/>
</dbReference>
<dbReference type="GO" id="GO:0005524">
    <property type="term" value="F:ATP binding"/>
    <property type="evidence" value="ECO:0007669"/>
    <property type="project" value="UniProtKB-UniRule"/>
</dbReference>
<dbReference type="GO" id="GO:0051731">
    <property type="term" value="F:polynucleotide 5'-hydroxyl-kinase activity"/>
    <property type="evidence" value="ECO:0007669"/>
    <property type="project" value="InterPro"/>
</dbReference>
<dbReference type="GO" id="GO:0031124">
    <property type="term" value="P:mRNA 3'-end processing"/>
    <property type="evidence" value="ECO:0007669"/>
    <property type="project" value="UniProtKB-UniRule"/>
</dbReference>
<dbReference type="GO" id="GO:0006388">
    <property type="term" value="P:tRNA splicing, via endonucleolytic cleavage and ligation"/>
    <property type="evidence" value="ECO:0000250"/>
    <property type="project" value="UniProtKB"/>
</dbReference>
<dbReference type="CDD" id="cd01983">
    <property type="entry name" value="SIMIBI"/>
    <property type="match status" value="1"/>
</dbReference>
<dbReference type="FunFam" id="2.40.30.330:FF:000001">
    <property type="entry name" value="Protein CLP1 homolog"/>
    <property type="match status" value="1"/>
</dbReference>
<dbReference type="FunFam" id="3.40.50.300:FF:000454">
    <property type="entry name" value="Protein CLP1 homolog"/>
    <property type="match status" value="1"/>
</dbReference>
<dbReference type="FunFam" id="2.60.120.1030:FF:000001">
    <property type="entry name" value="Protein CLP1 homolog 5"/>
    <property type="match status" value="1"/>
</dbReference>
<dbReference type="Gene3D" id="2.60.120.1030">
    <property type="entry name" value="Clp1, DNA binding domain"/>
    <property type="match status" value="1"/>
</dbReference>
<dbReference type="Gene3D" id="3.40.50.300">
    <property type="entry name" value="P-loop containing nucleotide triphosphate hydrolases"/>
    <property type="match status" value="1"/>
</dbReference>
<dbReference type="Gene3D" id="2.40.30.330">
    <property type="entry name" value="Pre-mRNA cleavage complex subunit Clp1, C-terminal domain"/>
    <property type="match status" value="1"/>
</dbReference>
<dbReference type="HAMAP" id="MF_03035">
    <property type="entry name" value="Clp1"/>
    <property type="match status" value="1"/>
</dbReference>
<dbReference type="InterPro" id="IPR028606">
    <property type="entry name" value="Clp1"/>
</dbReference>
<dbReference type="InterPro" id="IPR045116">
    <property type="entry name" value="Clp1/Grc3"/>
</dbReference>
<dbReference type="InterPro" id="IPR010655">
    <property type="entry name" value="Clp1_C"/>
</dbReference>
<dbReference type="InterPro" id="IPR038238">
    <property type="entry name" value="Clp1_C_sf"/>
</dbReference>
<dbReference type="InterPro" id="IPR032324">
    <property type="entry name" value="Clp1_N"/>
</dbReference>
<dbReference type="InterPro" id="IPR038239">
    <property type="entry name" value="Clp1_N_sf"/>
</dbReference>
<dbReference type="InterPro" id="IPR032319">
    <property type="entry name" value="CLP1_P"/>
</dbReference>
<dbReference type="InterPro" id="IPR027417">
    <property type="entry name" value="P-loop_NTPase"/>
</dbReference>
<dbReference type="PANTHER" id="PTHR12755">
    <property type="entry name" value="CLEAVAGE/POLYADENYLATION FACTOR IA SUBUNIT CLP1P"/>
    <property type="match status" value="1"/>
</dbReference>
<dbReference type="PANTHER" id="PTHR12755:SF6">
    <property type="entry name" value="POLYRIBONUCLEOTIDE 5'-HYDROXYL-KINASE CLP1"/>
    <property type="match status" value="1"/>
</dbReference>
<dbReference type="Pfam" id="PF06807">
    <property type="entry name" value="Clp1"/>
    <property type="match status" value="1"/>
</dbReference>
<dbReference type="Pfam" id="PF16573">
    <property type="entry name" value="CLP1_N"/>
    <property type="match status" value="1"/>
</dbReference>
<dbReference type="Pfam" id="PF16575">
    <property type="entry name" value="CLP1_P"/>
    <property type="match status" value="1"/>
</dbReference>
<dbReference type="SUPFAM" id="SSF52540">
    <property type="entry name" value="P-loop containing nucleoside triphosphate hydrolases"/>
    <property type="match status" value="1"/>
</dbReference>
<evidence type="ECO:0000255" key="1">
    <source>
        <dbReference type="HAMAP-Rule" id="MF_03035"/>
    </source>
</evidence>